<feature type="chain" id="PRO_0000263502" description="Elongation factor G">
    <location>
        <begin position="1"/>
        <end position="706"/>
    </location>
</feature>
<feature type="domain" description="tr-type G">
    <location>
        <begin position="12"/>
        <end position="288"/>
    </location>
</feature>
<feature type="region of interest" description="Disordered" evidence="2">
    <location>
        <begin position="288"/>
        <end position="309"/>
    </location>
</feature>
<feature type="compositionally biased region" description="Basic and acidic residues" evidence="2">
    <location>
        <begin position="297"/>
        <end position="309"/>
    </location>
</feature>
<feature type="binding site" evidence="1">
    <location>
        <begin position="21"/>
        <end position="28"/>
    </location>
    <ligand>
        <name>GTP</name>
        <dbReference type="ChEBI" id="CHEBI:37565"/>
    </ligand>
</feature>
<feature type="binding site" evidence="1">
    <location>
        <begin position="85"/>
        <end position="89"/>
    </location>
    <ligand>
        <name>GTP</name>
        <dbReference type="ChEBI" id="CHEBI:37565"/>
    </ligand>
</feature>
<feature type="binding site" evidence="1">
    <location>
        <begin position="139"/>
        <end position="142"/>
    </location>
    <ligand>
        <name>GTP</name>
        <dbReference type="ChEBI" id="CHEBI:37565"/>
    </ligand>
</feature>
<keyword id="KW-0963">Cytoplasm</keyword>
<keyword id="KW-0251">Elongation factor</keyword>
<keyword id="KW-0342">GTP-binding</keyword>
<keyword id="KW-0547">Nucleotide-binding</keyword>
<keyword id="KW-0648">Protein biosynthesis</keyword>
<keyword id="KW-1185">Reference proteome</keyword>
<dbReference type="EMBL" id="CP000159">
    <property type="protein sequence ID" value="ABC45180.1"/>
    <property type="molecule type" value="Genomic_DNA"/>
</dbReference>
<dbReference type="RefSeq" id="WP_011403792.1">
    <property type="nucleotide sequence ID" value="NC_007677.1"/>
</dbReference>
<dbReference type="RefSeq" id="YP_445164.1">
    <property type="nucleotide sequence ID" value="NC_007677.1"/>
</dbReference>
<dbReference type="SMR" id="Q2S3R7"/>
<dbReference type="STRING" id="309807.SRU_1032"/>
<dbReference type="EnsemblBacteria" id="ABC45180">
    <property type="protein sequence ID" value="ABC45180"/>
    <property type="gene ID" value="SRU_1032"/>
</dbReference>
<dbReference type="GeneID" id="83727961"/>
<dbReference type="KEGG" id="sru:SRU_1032"/>
<dbReference type="PATRIC" id="fig|309807.25.peg.1070"/>
<dbReference type="eggNOG" id="COG0480">
    <property type="taxonomic scope" value="Bacteria"/>
</dbReference>
<dbReference type="HOGENOM" id="CLU_002794_4_1_10"/>
<dbReference type="OrthoDB" id="9801591at2"/>
<dbReference type="Proteomes" id="UP000008674">
    <property type="component" value="Chromosome"/>
</dbReference>
<dbReference type="GO" id="GO:0005737">
    <property type="term" value="C:cytoplasm"/>
    <property type="evidence" value="ECO:0007669"/>
    <property type="project" value="UniProtKB-SubCell"/>
</dbReference>
<dbReference type="GO" id="GO:0005525">
    <property type="term" value="F:GTP binding"/>
    <property type="evidence" value="ECO:0007669"/>
    <property type="project" value="UniProtKB-UniRule"/>
</dbReference>
<dbReference type="GO" id="GO:0003924">
    <property type="term" value="F:GTPase activity"/>
    <property type="evidence" value="ECO:0007669"/>
    <property type="project" value="InterPro"/>
</dbReference>
<dbReference type="GO" id="GO:0003746">
    <property type="term" value="F:translation elongation factor activity"/>
    <property type="evidence" value="ECO:0007669"/>
    <property type="project" value="UniProtKB-UniRule"/>
</dbReference>
<dbReference type="GO" id="GO:0032790">
    <property type="term" value="P:ribosome disassembly"/>
    <property type="evidence" value="ECO:0007669"/>
    <property type="project" value="TreeGrafter"/>
</dbReference>
<dbReference type="CDD" id="cd01886">
    <property type="entry name" value="EF-G"/>
    <property type="match status" value="1"/>
</dbReference>
<dbReference type="CDD" id="cd16262">
    <property type="entry name" value="EFG_III"/>
    <property type="match status" value="1"/>
</dbReference>
<dbReference type="CDD" id="cd01434">
    <property type="entry name" value="EFG_mtEFG1_IV"/>
    <property type="match status" value="1"/>
</dbReference>
<dbReference type="CDD" id="cd03713">
    <property type="entry name" value="EFG_mtEFG_C"/>
    <property type="match status" value="1"/>
</dbReference>
<dbReference type="CDD" id="cd04088">
    <property type="entry name" value="EFG_mtEFG_II"/>
    <property type="match status" value="1"/>
</dbReference>
<dbReference type="FunFam" id="2.40.30.10:FF:000006">
    <property type="entry name" value="Elongation factor G"/>
    <property type="match status" value="1"/>
</dbReference>
<dbReference type="FunFam" id="3.30.230.10:FF:000003">
    <property type="entry name" value="Elongation factor G"/>
    <property type="match status" value="1"/>
</dbReference>
<dbReference type="FunFam" id="3.30.70.240:FF:000001">
    <property type="entry name" value="Elongation factor G"/>
    <property type="match status" value="1"/>
</dbReference>
<dbReference type="FunFam" id="3.30.70.870:FF:000001">
    <property type="entry name" value="Elongation factor G"/>
    <property type="match status" value="1"/>
</dbReference>
<dbReference type="FunFam" id="3.40.50.300:FF:000029">
    <property type="entry name" value="Elongation factor G"/>
    <property type="match status" value="1"/>
</dbReference>
<dbReference type="Gene3D" id="3.30.230.10">
    <property type="match status" value="1"/>
</dbReference>
<dbReference type="Gene3D" id="3.30.70.240">
    <property type="match status" value="1"/>
</dbReference>
<dbReference type="Gene3D" id="3.30.70.870">
    <property type="entry name" value="Elongation Factor G (Translational Gtpase), domain 3"/>
    <property type="match status" value="1"/>
</dbReference>
<dbReference type="Gene3D" id="3.40.50.300">
    <property type="entry name" value="P-loop containing nucleotide triphosphate hydrolases"/>
    <property type="match status" value="1"/>
</dbReference>
<dbReference type="Gene3D" id="2.40.30.10">
    <property type="entry name" value="Translation factors"/>
    <property type="match status" value="1"/>
</dbReference>
<dbReference type="HAMAP" id="MF_00054_B">
    <property type="entry name" value="EF_G_EF_2_B"/>
    <property type="match status" value="1"/>
</dbReference>
<dbReference type="InterPro" id="IPR053905">
    <property type="entry name" value="EF-G-like_DII"/>
</dbReference>
<dbReference type="InterPro" id="IPR041095">
    <property type="entry name" value="EFG_II"/>
</dbReference>
<dbReference type="InterPro" id="IPR009022">
    <property type="entry name" value="EFG_III"/>
</dbReference>
<dbReference type="InterPro" id="IPR035647">
    <property type="entry name" value="EFG_III/V"/>
</dbReference>
<dbReference type="InterPro" id="IPR047872">
    <property type="entry name" value="EFG_IV"/>
</dbReference>
<dbReference type="InterPro" id="IPR035649">
    <property type="entry name" value="EFG_V"/>
</dbReference>
<dbReference type="InterPro" id="IPR000640">
    <property type="entry name" value="EFG_V-like"/>
</dbReference>
<dbReference type="InterPro" id="IPR031157">
    <property type="entry name" value="G_TR_CS"/>
</dbReference>
<dbReference type="InterPro" id="IPR027417">
    <property type="entry name" value="P-loop_NTPase"/>
</dbReference>
<dbReference type="InterPro" id="IPR020568">
    <property type="entry name" value="Ribosomal_Su5_D2-typ_SF"/>
</dbReference>
<dbReference type="InterPro" id="IPR014721">
    <property type="entry name" value="Ribsml_uS5_D2-typ_fold_subgr"/>
</dbReference>
<dbReference type="InterPro" id="IPR005225">
    <property type="entry name" value="Small_GTP-bd"/>
</dbReference>
<dbReference type="InterPro" id="IPR000795">
    <property type="entry name" value="T_Tr_GTP-bd_dom"/>
</dbReference>
<dbReference type="InterPro" id="IPR009000">
    <property type="entry name" value="Transl_B-barrel_sf"/>
</dbReference>
<dbReference type="InterPro" id="IPR004540">
    <property type="entry name" value="Transl_elong_EFG/EF2"/>
</dbReference>
<dbReference type="InterPro" id="IPR005517">
    <property type="entry name" value="Transl_elong_EFG/EF2_IV"/>
</dbReference>
<dbReference type="NCBIfam" id="TIGR00484">
    <property type="entry name" value="EF-G"/>
    <property type="match status" value="1"/>
</dbReference>
<dbReference type="NCBIfam" id="NF009381">
    <property type="entry name" value="PRK12740.1-5"/>
    <property type="match status" value="1"/>
</dbReference>
<dbReference type="NCBIfam" id="TIGR00231">
    <property type="entry name" value="small_GTP"/>
    <property type="match status" value="1"/>
</dbReference>
<dbReference type="PANTHER" id="PTHR43261:SF1">
    <property type="entry name" value="RIBOSOME-RELEASING FACTOR 2, MITOCHONDRIAL"/>
    <property type="match status" value="1"/>
</dbReference>
<dbReference type="PANTHER" id="PTHR43261">
    <property type="entry name" value="TRANSLATION ELONGATION FACTOR G-RELATED"/>
    <property type="match status" value="1"/>
</dbReference>
<dbReference type="Pfam" id="PF22042">
    <property type="entry name" value="EF-G_D2"/>
    <property type="match status" value="1"/>
</dbReference>
<dbReference type="Pfam" id="PF00679">
    <property type="entry name" value="EFG_C"/>
    <property type="match status" value="1"/>
</dbReference>
<dbReference type="Pfam" id="PF14492">
    <property type="entry name" value="EFG_III"/>
    <property type="match status" value="1"/>
</dbReference>
<dbReference type="Pfam" id="PF03764">
    <property type="entry name" value="EFG_IV"/>
    <property type="match status" value="1"/>
</dbReference>
<dbReference type="Pfam" id="PF00009">
    <property type="entry name" value="GTP_EFTU"/>
    <property type="match status" value="1"/>
</dbReference>
<dbReference type="PRINTS" id="PR00315">
    <property type="entry name" value="ELONGATNFCT"/>
</dbReference>
<dbReference type="SMART" id="SM00838">
    <property type="entry name" value="EFG_C"/>
    <property type="match status" value="1"/>
</dbReference>
<dbReference type="SMART" id="SM00889">
    <property type="entry name" value="EFG_IV"/>
    <property type="match status" value="1"/>
</dbReference>
<dbReference type="SUPFAM" id="SSF54980">
    <property type="entry name" value="EF-G C-terminal domain-like"/>
    <property type="match status" value="2"/>
</dbReference>
<dbReference type="SUPFAM" id="SSF52540">
    <property type="entry name" value="P-loop containing nucleoside triphosphate hydrolases"/>
    <property type="match status" value="1"/>
</dbReference>
<dbReference type="SUPFAM" id="SSF54211">
    <property type="entry name" value="Ribosomal protein S5 domain 2-like"/>
    <property type="match status" value="1"/>
</dbReference>
<dbReference type="SUPFAM" id="SSF50447">
    <property type="entry name" value="Translation proteins"/>
    <property type="match status" value="1"/>
</dbReference>
<dbReference type="PROSITE" id="PS00301">
    <property type="entry name" value="G_TR_1"/>
    <property type="match status" value="1"/>
</dbReference>
<dbReference type="PROSITE" id="PS51722">
    <property type="entry name" value="G_TR_2"/>
    <property type="match status" value="1"/>
</dbReference>
<proteinExistence type="inferred from homology"/>
<comment type="function">
    <text evidence="1">Catalyzes the GTP-dependent ribosomal translocation step during translation elongation. During this step, the ribosome changes from the pre-translocational (PRE) to the post-translocational (POST) state as the newly formed A-site-bound peptidyl-tRNA and P-site-bound deacylated tRNA move to the P and E sites, respectively. Catalyzes the coordinated movement of the two tRNA molecules, the mRNA and conformational changes in the ribosome.</text>
</comment>
<comment type="subcellular location">
    <subcellularLocation>
        <location evidence="1">Cytoplasm</location>
    </subcellularLocation>
</comment>
<comment type="similarity">
    <text evidence="1">Belongs to the TRAFAC class translation factor GTPase superfamily. Classic translation factor GTPase family. EF-G/EF-2 subfamily.</text>
</comment>
<gene>
    <name evidence="1" type="primary">fusA</name>
    <name type="ordered locus">SRU_1032</name>
</gene>
<reference key="1">
    <citation type="journal article" date="2005" name="Proc. Natl. Acad. Sci. U.S.A.">
        <title>The genome of Salinibacter ruber: convergence and gene exchange among hyperhalophilic bacteria and archaea.</title>
        <authorList>
            <person name="Mongodin E.F."/>
            <person name="Nelson K.E."/>
            <person name="Daugherty S."/>
            <person name="DeBoy R.T."/>
            <person name="Wister J."/>
            <person name="Khouri H."/>
            <person name="Weidman J."/>
            <person name="Walsh D.A."/>
            <person name="Papke R.T."/>
            <person name="Sanchez Perez G."/>
            <person name="Sharma A.K."/>
            <person name="Nesbo C.L."/>
            <person name="MacLeod D."/>
            <person name="Bapteste E."/>
            <person name="Doolittle W.F."/>
            <person name="Charlebois R.L."/>
            <person name="Legault B."/>
            <person name="Rodriguez-Valera F."/>
        </authorList>
    </citation>
    <scope>NUCLEOTIDE SEQUENCE [LARGE SCALE GENOMIC DNA]</scope>
    <source>
        <strain>DSM 13855 / CECT 5946 / M31</strain>
    </source>
</reference>
<accession>Q2S3R7</accession>
<sequence length="706" mass="79105">MATQTNESFPLEKTRNIGIMAHIDAGKTTLTERILFYTGRLHRMGEVHEGAATMDFMEQEKERGITITSAATTCYWDDHRVNIIDTPGHVDFTVEVERSLRVLDGAIALFCAVGGVEPQSETVWRQAEKYDVPRIGFVNKMDRTGADFENVLEMMEDRLSANPVPVQYPIGAGDMFRGVIDLIEGKAIIYDDESQGMQWDVREIPDDLESKAEHWRINLLESVAEYDDELLMKYLDEDQEVEPEELHTVIRKATLNRDMTPMFCGSALKNTGVQRVLDGVTNYLPSPNDVPAITGHHPQDKEEDITRHPREDEPFSAVAFKITTDPYVGKLTFVRVYSGTLESGSRVYSPTRDEDERIGRMMFMHADSREDVDVIRAGDIAAVVGPKNLKTGDTICDPDHPVVLESMDFPEPVIRIAVEPRTKADRDKLTNGLTKLAEEDPTFNVRTDEETGQTIIAGMGELHLEIIIDRLKQEFKVEANVGQPQVAYREALTDMIDEHYVLKKQSGGRGQFAEVYMDVGPIPEEEEEESGLVFENEIKGGVIPKEFIPSVERGIESAMEDGPLAGYPIEGVWVRLYDGDHHEVDSDQNAFEIAGRLGFREAARHANPVLMEPVMEVEVVTPDDYMGDIIGDLNGRRGQIGQMGQRNDAQVINAEVPLSEMFGYSTDLRSLSQGRAIYTMQFGSYEPVPEEVASEIMDEQTMSATA</sequence>
<organism>
    <name type="scientific">Salinibacter ruber (strain DSM 13855 / M31)</name>
    <dbReference type="NCBI Taxonomy" id="309807"/>
    <lineage>
        <taxon>Bacteria</taxon>
        <taxon>Pseudomonadati</taxon>
        <taxon>Rhodothermota</taxon>
        <taxon>Rhodothermia</taxon>
        <taxon>Rhodothermales</taxon>
        <taxon>Salinibacteraceae</taxon>
        <taxon>Salinibacter</taxon>
    </lineage>
</organism>
<protein>
    <recommendedName>
        <fullName evidence="1">Elongation factor G</fullName>
        <shortName evidence="1">EF-G</shortName>
    </recommendedName>
</protein>
<evidence type="ECO:0000255" key="1">
    <source>
        <dbReference type="HAMAP-Rule" id="MF_00054"/>
    </source>
</evidence>
<evidence type="ECO:0000256" key="2">
    <source>
        <dbReference type="SAM" id="MobiDB-lite"/>
    </source>
</evidence>
<name>EFG_SALRD</name>